<gene>
    <name type="primary">HIS3</name>
    <name type="ordered locus">CNBL1590</name>
</gene>
<dbReference type="EC" id="4.2.1.19"/>
<dbReference type="EMBL" id="AAEY01000057">
    <property type="protein sequence ID" value="EAL17644.1"/>
    <property type="molecule type" value="Genomic_DNA"/>
</dbReference>
<dbReference type="RefSeq" id="XP_772291.1">
    <property type="nucleotide sequence ID" value="XM_767198.1"/>
</dbReference>
<dbReference type="SMR" id="P0CO23"/>
<dbReference type="BindingDB" id="P0CO23"/>
<dbReference type="ChEMBL" id="CHEMBL3226"/>
<dbReference type="EnsemblFungi" id="AAW45034">
    <property type="protein sequence ID" value="AAW45034"/>
    <property type="gene ID" value="CNH01620"/>
</dbReference>
<dbReference type="GeneID" id="4939208"/>
<dbReference type="KEGG" id="cnb:CNBL1590"/>
<dbReference type="VEuPathDB" id="FungiDB:CNBL1590"/>
<dbReference type="HOGENOM" id="CLU_044308_3_0_1"/>
<dbReference type="OrthoDB" id="591at5206"/>
<dbReference type="UniPathway" id="UPA00031">
    <property type="reaction ID" value="UER00011"/>
</dbReference>
<dbReference type="GO" id="GO:0004424">
    <property type="term" value="F:imidazoleglycerol-phosphate dehydratase activity"/>
    <property type="evidence" value="ECO:0007669"/>
    <property type="project" value="UniProtKB-EC"/>
</dbReference>
<dbReference type="GO" id="GO:0000105">
    <property type="term" value="P:L-histidine biosynthetic process"/>
    <property type="evidence" value="ECO:0007669"/>
    <property type="project" value="UniProtKB-UniPathway"/>
</dbReference>
<dbReference type="CDD" id="cd07914">
    <property type="entry name" value="IGPD"/>
    <property type="match status" value="1"/>
</dbReference>
<dbReference type="FunFam" id="3.30.230.40:FF:000004">
    <property type="entry name" value="Imidazoleglycerol-phosphate dehydratase"/>
    <property type="match status" value="1"/>
</dbReference>
<dbReference type="FunFam" id="3.30.230.40:FF:000001">
    <property type="entry name" value="Imidazoleglycerol-phosphate dehydratase HisB"/>
    <property type="match status" value="1"/>
</dbReference>
<dbReference type="Gene3D" id="3.30.230.40">
    <property type="entry name" value="Imidazole glycerol phosphate dehydratase, domain 1"/>
    <property type="match status" value="2"/>
</dbReference>
<dbReference type="HAMAP" id="MF_00076">
    <property type="entry name" value="HisB"/>
    <property type="match status" value="1"/>
</dbReference>
<dbReference type="InterPro" id="IPR038494">
    <property type="entry name" value="IGPD_sf"/>
</dbReference>
<dbReference type="InterPro" id="IPR000807">
    <property type="entry name" value="ImidazoleglycerolP_deHydtase"/>
</dbReference>
<dbReference type="InterPro" id="IPR020565">
    <property type="entry name" value="ImidazoleglycerP_deHydtase_CS"/>
</dbReference>
<dbReference type="InterPro" id="IPR020568">
    <property type="entry name" value="Ribosomal_Su5_D2-typ_SF"/>
</dbReference>
<dbReference type="NCBIfam" id="NF002111">
    <property type="entry name" value="PRK00951.2-1"/>
    <property type="match status" value="1"/>
</dbReference>
<dbReference type="NCBIfam" id="NF002114">
    <property type="entry name" value="PRK00951.2-4"/>
    <property type="match status" value="1"/>
</dbReference>
<dbReference type="PANTHER" id="PTHR23133:SF2">
    <property type="entry name" value="IMIDAZOLEGLYCEROL-PHOSPHATE DEHYDRATASE"/>
    <property type="match status" value="1"/>
</dbReference>
<dbReference type="PANTHER" id="PTHR23133">
    <property type="entry name" value="IMIDAZOLEGLYCEROL-PHOSPHATE DEHYDRATASE HIS7"/>
    <property type="match status" value="1"/>
</dbReference>
<dbReference type="Pfam" id="PF00475">
    <property type="entry name" value="IGPD"/>
    <property type="match status" value="1"/>
</dbReference>
<dbReference type="SUPFAM" id="SSF54211">
    <property type="entry name" value="Ribosomal protein S5 domain 2-like"/>
    <property type="match status" value="2"/>
</dbReference>
<dbReference type="PROSITE" id="PS00954">
    <property type="entry name" value="IGP_DEHYDRATASE_1"/>
    <property type="match status" value="1"/>
</dbReference>
<dbReference type="PROSITE" id="PS00955">
    <property type="entry name" value="IGP_DEHYDRATASE_2"/>
    <property type="match status" value="1"/>
</dbReference>
<proteinExistence type="inferred from homology"/>
<name>HIS7_CRYNB</name>
<organism>
    <name type="scientific">Cryptococcus neoformans var. neoformans serotype D (strain B-3501A)</name>
    <name type="common">Filobasidiella neoformans</name>
    <dbReference type="NCBI Taxonomy" id="283643"/>
    <lineage>
        <taxon>Eukaryota</taxon>
        <taxon>Fungi</taxon>
        <taxon>Dikarya</taxon>
        <taxon>Basidiomycota</taxon>
        <taxon>Agaricomycotina</taxon>
        <taxon>Tremellomycetes</taxon>
        <taxon>Tremellales</taxon>
        <taxon>Cryptococcaceae</taxon>
        <taxon>Cryptococcus</taxon>
        <taxon>Cryptococcus neoformans species complex</taxon>
    </lineage>
</organism>
<evidence type="ECO:0000305" key="1"/>
<reference key="1">
    <citation type="journal article" date="2005" name="Science">
        <title>The genome of the basidiomycetous yeast and human pathogen Cryptococcus neoformans.</title>
        <authorList>
            <person name="Loftus B.J."/>
            <person name="Fung E."/>
            <person name="Roncaglia P."/>
            <person name="Rowley D."/>
            <person name="Amedeo P."/>
            <person name="Bruno D."/>
            <person name="Vamathevan J."/>
            <person name="Miranda M."/>
            <person name="Anderson I.J."/>
            <person name="Fraser J.A."/>
            <person name="Allen J.E."/>
            <person name="Bosdet I.E."/>
            <person name="Brent M.R."/>
            <person name="Chiu R."/>
            <person name="Doering T.L."/>
            <person name="Donlin M.J."/>
            <person name="D'Souza C.A."/>
            <person name="Fox D.S."/>
            <person name="Grinberg V."/>
            <person name="Fu J."/>
            <person name="Fukushima M."/>
            <person name="Haas B.J."/>
            <person name="Huang J.C."/>
            <person name="Janbon G."/>
            <person name="Jones S.J.M."/>
            <person name="Koo H.L."/>
            <person name="Krzywinski M.I."/>
            <person name="Kwon-Chung K.J."/>
            <person name="Lengeler K.B."/>
            <person name="Maiti R."/>
            <person name="Marra M.A."/>
            <person name="Marra R.E."/>
            <person name="Mathewson C.A."/>
            <person name="Mitchell T.G."/>
            <person name="Pertea M."/>
            <person name="Riggs F.R."/>
            <person name="Salzberg S.L."/>
            <person name="Schein J.E."/>
            <person name="Shvartsbeyn A."/>
            <person name="Shin H."/>
            <person name="Shumway M."/>
            <person name="Specht C.A."/>
            <person name="Suh B.B."/>
            <person name="Tenney A."/>
            <person name="Utterback T.R."/>
            <person name="Wickes B.L."/>
            <person name="Wortman J.R."/>
            <person name="Wye N.H."/>
            <person name="Kronstad J.W."/>
            <person name="Lodge J.K."/>
            <person name="Heitman J."/>
            <person name="Davis R.W."/>
            <person name="Fraser C.M."/>
            <person name="Hyman R.W."/>
        </authorList>
    </citation>
    <scope>NUCLEOTIDE SEQUENCE [LARGE SCALE GENOMIC DNA]</scope>
    <source>
        <strain>B-3501A</strain>
    </source>
</reference>
<accession>P0CO23</accession>
<accession>P40919</accession>
<accession>Q55J26</accession>
<accession>Q5KCM8</accession>
<feature type="chain" id="PRO_0000410116" description="Imidazoleglycerol-phosphate dehydratase">
    <location>
        <begin position="1"/>
        <end position="202"/>
    </location>
</feature>
<keyword id="KW-0028">Amino-acid biosynthesis</keyword>
<keyword id="KW-0368">Histidine biosynthesis</keyword>
<keyword id="KW-0456">Lyase</keyword>
<protein>
    <recommendedName>
        <fullName>Imidazoleglycerol-phosphate dehydratase</fullName>
        <shortName>IGPD</shortName>
        <ecNumber>4.2.1.19</ecNumber>
    </recommendedName>
</protein>
<sequence length="202" mass="21976">MSERIASVERTTSETHISCTIDLDHIPGVTEQKINVSTGIGFLDHMFTALAKHGGMSLQLQCKGDLHIDDHHTAEDCALALGEAFKKALGERKGIKRYGYAYAPLDESLSRAVIDISSRPYFMCHLPFTREKVGDLSTEMVSHLLQSFAFAAGVTLHIDSIRGENNHHIAESAFKALALAIRMAISRTGGDDVPSTKGVLAL</sequence>
<comment type="catalytic activity">
    <reaction>
        <text>D-erythro-1-(imidazol-4-yl)glycerol 3-phosphate = 3-(imidazol-4-yl)-2-oxopropyl phosphate + H2O</text>
        <dbReference type="Rhea" id="RHEA:11040"/>
        <dbReference type="ChEBI" id="CHEBI:15377"/>
        <dbReference type="ChEBI" id="CHEBI:57766"/>
        <dbReference type="ChEBI" id="CHEBI:58278"/>
        <dbReference type="EC" id="4.2.1.19"/>
    </reaction>
</comment>
<comment type="pathway">
    <text>Amino-acid biosynthesis; L-histidine biosynthesis; L-histidine from 5-phospho-alpha-D-ribose 1-diphosphate: step 6/9.</text>
</comment>
<comment type="subunit">
    <text>Homotrimer.</text>
</comment>
<comment type="similarity">
    <text evidence="1">Belongs to the imidazoleglycerol-phosphate dehydratase family.</text>
</comment>